<organism>
    <name type="scientific">Ralstonia nicotianae (strain ATCC BAA-1114 / GMI1000)</name>
    <name type="common">Ralstonia solanacearum</name>
    <dbReference type="NCBI Taxonomy" id="267608"/>
    <lineage>
        <taxon>Bacteria</taxon>
        <taxon>Pseudomonadati</taxon>
        <taxon>Pseudomonadota</taxon>
        <taxon>Betaproteobacteria</taxon>
        <taxon>Burkholderiales</taxon>
        <taxon>Burkholderiaceae</taxon>
        <taxon>Ralstonia</taxon>
        <taxon>Ralstonia solanacearum species complex</taxon>
    </lineage>
</organism>
<gene>
    <name evidence="1" type="primary">glnE</name>
    <name type="ordered locus">RSc2656</name>
    <name type="ORF">RS04556</name>
</gene>
<accession>Q8XW19</accession>
<evidence type="ECO:0000255" key="1">
    <source>
        <dbReference type="HAMAP-Rule" id="MF_00802"/>
    </source>
</evidence>
<protein>
    <recommendedName>
        <fullName evidence="1">Bifunctional glutamine synthetase adenylyltransferase/adenylyl-removing enzyme</fullName>
    </recommendedName>
    <alternativeName>
        <fullName evidence="1">ATP:glutamine synthetase adenylyltransferase</fullName>
    </alternativeName>
    <alternativeName>
        <fullName evidence="1">ATase</fullName>
    </alternativeName>
    <domain>
        <recommendedName>
            <fullName evidence="1">Glutamine synthetase adenylyl-L-tyrosine phosphorylase</fullName>
            <ecNumber evidence="1">2.7.7.89</ecNumber>
        </recommendedName>
        <alternativeName>
            <fullName evidence="1">Adenylyl removase</fullName>
            <shortName evidence="1">AR</shortName>
            <shortName evidence="1">AT-N</shortName>
        </alternativeName>
    </domain>
    <domain>
        <recommendedName>
            <fullName evidence="1">Glutamine synthetase adenylyl transferase</fullName>
            <ecNumber evidence="1">2.7.7.42</ecNumber>
        </recommendedName>
        <alternativeName>
            <fullName evidence="1">Adenylyl transferase</fullName>
            <shortName evidence="1">AT</shortName>
            <shortName evidence="1">AT-C</shortName>
        </alternativeName>
    </domain>
</protein>
<feature type="chain" id="PRO_0000209270" description="Bifunctional glutamine synthetase adenylyltransferase/adenylyl-removing enzyme">
    <location>
        <begin position="1"/>
        <end position="955"/>
    </location>
</feature>
<feature type="region of interest" description="Adenylyl removase" evidence="1">
    <location>
        <begin position="1"/>
        <end position="458"/>
    </location>
</feature>
<feature type="region of interest" description="Adenylyl transferase" evidence="1">
    <location>
        <begin position="464"/>
        <end position="955"/>
    </location>
</feature>
<dbReference type="EC" id="2.7.7.89" evidence="1"/>
<dbReference type="EC" id="2.7.7.42" evidence="1"/>
<dbReference type="EMBL" id="AL646052">
    <property type="protein sequence ID" value="CAD16363.1"/>
    <property type="molecule type" value="Genomic_DNA"/>
</dbReference>
<dbReference type="RefSeq" id="WP_011002566.1">
    <property type="nucleotide sequence ID" value="NC_003295.1"/>
</dbReference>
<dbReference type="SMR" id="Q8XW19"/>
<dbReference type="STRING" id="267608.RSc2656"/>
<dbReference type="EnsemblBacteria" id="CAD16363">
    <property type="protein sequence ID" value="CAD16363"/>
    <property type="gene ID" value="RSc2656"/>
</dbReference>
<dbReference type="KEGG" id="rso:RSc2656"/>
<dbReference type="eggNOG" id="COG1391">
    <property type="taxonomic scope" value="Bacteria"/>
</dbReference>
<dbReference type="HOGENOM" id="CLU_006233_0_1_4"/>
<dbReference type="Proteomes" id="UP000001436">
    <property type="component" value="Chromosome"/>
</dbReference>
<dbReference type="GO" id="GO:0005829">
    <property type="term" value="C:cytosol"/>
    <property type="evidence" value="ECO:0007669"/>
    <property type="project" value="TreeGrafter"/>
</dbReference>
<dbReference type="GO" id="GO:0008882">
    <property type="term" value="F:[glutamate-ammonia-ligase] adenylyltransferase activity"/>
    <property type="evidence" value="ECO:0007669"/>
    <property type="project" value="UniProtKB-UniRule"/>
</dbReference>
<dbReference type="GO" id="GO:0047388">
    <property type="term" value="F:[glutamine synthetase]-adenylyl-L-tyrosine phosphorylase activity"/>
    <property type="evidence" value="ECO:0007669"/>
    <property type="project" value="UniProtKB-EC"/>
</dbReference>
<dbReference type="GO" id="GO:0005524">
    <property type="term" value="F:ATP binding"/>
    <property type="evidence" value="ECO:0007669"/>
    <property type="project" value="UniProtKB-UniRule"/>
</dbReference>
<dbReference type="GO" id="GO:0000287">
    <property type="term" value="F:magnesium ion binding"/>
    <property type="evidence" value="ECO:0007669"/>
    <property type="project" value="UniProtKB-UniRule"/>
</dbReference>
<dbReference type="GO" id="GO:0000820">
    <property type="term" value="P:regulation of glutamine family amino acid metabolic process"/>
    <property type="evidence" value="ECO:0007669"/>
    <property type="project" value="UniProtKB-UniRule"/>
</dbReference>
<dbReference type="CDD" id="cd05401">
    <property type="entry name" value="NT_GlnE_GlnD_like"/>
    <property type="match status" value="2"/>
</dbReference>
<dbReference type="FunFam" id="1.20.120.330:FF:000005">
    <property type="entry name" value="Bifunctional glutamine synthetase adenylyltransferase/adenylyl-removing enzyme"/>
    <property type="match status" value="1"/>
</dbReference>
<dbReference type="Gene3D" id="1.20.120.1510">
    <property type="match status" value="1"/>
</dbReference>
<dbReference type="Gene3D" id="3.30.460.10">
    <property type="entry name" value="Beta Polymerase, domain 2"/>
    <property type="match status" value="2"/>
</dbReference>
<dbReference type="Gene3D" id="1.20.120.330">
    <property type="entry name" value="Nucleotidyltransferases domain 2"/>
    <property type="match status" value="2"/>
</dbReference>
<dbReference type="HAMAP" id="MF_00802">
    <property type="entry name" value="GlnE"/>
    <property type="match status" value="1"/>
</dbReference>
<dbReference type="InterPro" id="IPR023057">
    <property type="entry name" value="GlnE"/>
</dbReference>
<dbReference type="InterPro" id="IPR005190">
    <property type="entry name" value="GlnE_rpt_dom"/>
</dbReference>
<dbReference type="InterPro" id="IPR043519">
    <property type="entry name" value="NT_sf"/>
</dbReference>
<dbReference type="InterPro" id="IPR013546">
    <property type="entry name" value="PII_UdlTrfase/GS_AdlTrfase"/>
</dbReference>
<dbReference type="NCBIfam" id="NF008292">
    <property type="entry name" value="PRK11072.1"/>
    <property type="match status" value="1"/>
</dbReference>
<dbReference type="PANTHER" id="PTHR30621:SF0">
    <property type="entry name" value="BIFUNCTIONAL GLUTAMINE SYNTHETASE ADENYLYLTRANSFERASE_ADENYLYL-REMOVING ENZYME"/>
    <property type="match status" value="1"/>
</dbReference>
<dbReference type="PANTHER" id="PTHR30621">
    <property type="entry name" value="GLUTAMINE SYNTHETASE ADENYLYLTRANSFERASE"/>
    <property type="match status" value="1"/>
</dbReference>
<dbReference type="Pfam" id="PF08335">
    <property type="entry name" value="GlnD_UR_UTase"/>
    <property type="match status" value="2"/>
</dbReference>
<dbReference type="Pfam" id="PF03710">
    <property type="entry name" value="GlnE"/>
    <property type="match status" value="2"/>
</dbReference>
<dbReference type="SUPFAM" id="SSF81301">
    <property type="entry name" value="Nucleotidyltransferase"/>
    <property type="match status" value="2"/>
</dbReference>
<dbReference type="SUPFAM" id="SSF81593">
    <property type="entry name" value="Nucleotidyltransferase substrate binding subunit/domain"/>
    <property type="match status" value="2"/>
</dbReference>
<reference key="1">
    <citation type="journal article" date="2002" name="Nature">
        <title>Genome sequence of the plant pathogen Ralstonia solanacearum.</title>
        <authorList>
            <person name="Salanoubat M."/>
            <person name="Genin S."/>
            <person name="Artiguenave F."/>
            <person name="Gouzy J."/>
            <person name="Mangenot S."/>
            <person name="Arlat M."/>
            <person name="Billault A."/>
            <person name="Brottier P."/>
            <person name="Camus J.-C."/>
            <person name="Cattolico L."/>
            <person name="Chandler M."/>
            <person name="Choisne N."/>
            <person name="Claudel-Renard C."/>
            <person name="Cunnac S."/>
            <person name="Demange N."/>
            <person name="Gaspin C."/>
            <person name="Lavie M."/>
            <person name="Moisan A."/>
            <person name="Robert C."/>
            <person name="Saurin W."/>
            <person name="Schiex T."/>
            <person name="Siguier P."/>
            <person name="Thebault P."/>
            <person name="Whalen M."/>
            <person name="Wincker P."/>
            <person name="Levy M."/>
            <person name="Weissenbach J."/>
            <person name="Boucher C.A."/>
        </authorList>
    </citation>
    <scope>NUCLEOTIDE SEQUENCE [LARGE SCALE GENOMIC DNA]</scope>
    <source>
        <strain>ATCC BAA-1114 / GMI1000</strain>
    </source>
</reference>
<keyword id="KW-0067">ATP-binding</keyword>
<keyword id="KW-0460">Magnesium</keyword>
<keyword id="KW-0511">Multifunctional enzyme</keyword>
<keyword id="KW-0547">Nucleotide-binding</keyword>
<keyword id="KW-0548">Nucleotidyltransferase</keyword>
<keyword id="KW-1185">Reference proteome</keyword>
<keyword id="KW-0808">Transferase</keyword>
<proteinExistence type="inferred from homology"/>
<name>GLNE_RALN1</name>
<comment type="function">
    <text evidence="1">Involved in the regulation of glutamine synthetase GlnA, a key enzyme in the process to assimilate ammonia. When cellular nitrogen levels are high, the C-terminal adenylyl transferase (AT) inactivates GlnA by covalent transfer of an adenylyl group from ATP to specific tyrosine residue of GlnA, thus reducing its activity. Conversely, when nitrogen levels are low, the N-terminal adenylyl removase (AR) activates GlnA by removing the adenylyl group by phosphorolysis, increasing its activity. The regulatory region of GlnE binds the signal transduction protein PII (GlnB) which indicates the nitrogen status of the cell.</text>
</comment>
<comment type="catalytic activity">
    <reaction evidence="1">
        <text>[glutamine synthetase]-O(4)-(5'-adenylyl)-L-tyrosine + phosphate = [glutamine synthetase]-L-tyrosine + ADP</text>
        <dbReference type="Rhea" id="RHEA:43716"/>
        <dbReference type="Rhea" id="RHEA-COMP:10660"/>
        <dbReference type="Rhea" id="RHEA-COMP:10661"/>
        <dbReference type="ChEBI" id="CHEBI:43474"/>
        <dbReference type="ChEBI" id="CHEBI:46858"/>
        <dbReference type="ChEBI" id="CHEBI:83624"/>
        <dbReference type="ChEBI" id="CHEBI:456216"/>
        <dbReference type="EC" id="2.7.7.89"/>
    </reaction>
</comment>
<comment type="catalytic activity">
    <reaction evidence="1">
        <text>[glutamine synthetase]-L-tyrosine + ATP = [glutamine synthetase]-O(4)-(5'-adenylyl)-L-tyrosine + diphosphate</text>
        <dbReference type="Rhea" id="RHEA:18589"/>
        <dbReference type="Rhea" id="RHEA-COMP:10660"/>
        <dbReference type="Rhea" id="RHEA-COMP:10661"/>
        <dbReference type="ChEBI" id="CHEBI:30616"/>
        <dbReference type="ChEBI" id="CHEBI:33019"/>
        <dbReference type="ChEBI" id="CHEBI:46858"/>
        <dbReference type="ChEBI" id="CHEBI:83624"/>
        <dbReference type="EC" id="2.7.7.42"/>
    </reaction>
</comment>
<comment type="cofactor">
    <cofactor evidence="1">
        <name>Mg(2+)</name>
        <dbReference type="ChEBI" id="CHEBI:18420"/>
    </cofactor>
</comment>
<comment type="similarity">
    <text evidence="1">Belongs to the GlnE family.</text>
</comment>
<sequence>MTAQAPLSVAPFLQTPACPSEAPGAVLPFSLNYSRYVQRLAQARAGWAERVQAAAAGPISVAWLSARFGELFEAAAAEPEQALKRALRLLRNEVFAALAERDLSGAATLDEVTGAMTDFAEFAVRAAIAVIGQELGALHGQPVGQSSGEVQELVVVGMGKLGGRELNVSSDIDLIFLYDEEGDTQGGPRPLSNHEYFTKLGRRLINALADVTEDGYVFRVDMRLRPNGDAGPLACSLGMLEEYFVVQGREWERYAWIKGRVITDPGSPHAARVIQQLERVTTPFVFRRYLDYGVIAAIRALHAQIRAEAAKRSNAANRQHGGHDSQVQAHAPNIKLGRGGIREIEFVAQVFQLIRGGQDFGLRIRPTLEVLRAAAERGLIGADAVARLTDAYRFLRQLEHRLQYVDDAQTHNLPGAPEDQLRIARMMGFADYAALVAQLERYQDEVAQQFEQTFSDKQDNQPPCAAIWHADLLDDERTESARAQLLELGYADADSVLERLRASRHSPRYRALSEVSRQRFDLLINRALDHAARQTDADVTIARFLDFFDAISRRSSYLSLLSEYPQAMARVAHTLHASRWAADYLTRHPQLLDELLDTEALSAAPDWQGFRERVRERLRAAGDHVEMQMDILRQEHHAETFRILLQDLQGMLTVEPISDRLSDLADAVLDLTLETVWQQVSTRHREVPRFAVVAYGRLGGKELGYASDLDLIFLYDDDDERAPEVYAAYARKLITWLTSHTAAGMLFDVDTRLRPNGAAGLMVTHFEAFRRYQMREGDNAAWVWEHQALTRARFCAGDPEIGARFEALRIAVLRQPREAGPLRDEIAAMRERVLEGHANPTPLFDLKHDRGGMVDIEFTVQFLVLLHSAAYAELTRNAGNIALLRMAGELGLIDAARAARVADAYRDFRARQHKLRLDGQSAARVPAGTCAHEAAHVRALWEQVFGSIDAASPTP</sequence>